<feature type="chain" id="PRO_0000407398" description="tRNA pseudouridine synthase Pus10">
    <location>
        <begin position="1"/>
        <end position="389"/>
    </location>
</feature>
<feature type="active site" description="Nucleophile" evidence="1">
    <location>
        <position position="213"/>
    </location>
</feature>
<feature type="binding site" evidence="1">
    <location>
        <position position="278"/>
    </location>
    <ligand>
        <name>substrate</name>
    </ligand>
</feature>
<feature type="binding site" evidence="1">
    <location>
        <position position="350"/>
    </location>
    <ligand>
        <name>substrate</name>
    </ligand>
</feature>
<organism>
    <name type="scientific">Thermoplasma acidophilum (strain ATCC 25905 / DSM 1728 / JCM 9062 / NBRC 15155 / AMRC-C165)</name>
    <dbReference type="NCBI Taxonomy" id="273075"/>
    <lineage>
        <taxon>Archaea</taxon>
        <taxon>Methanobacteriati</taxon>
        <taxon>Thermoplasmatota</taxon>
        <taxon>Thermoplasmata</taxon>
        <taxon>Thermoplasmatales</taxon>
        <taxon>Thermoplasmataceae</taxon>
        <taxon>Thermoplasma</taxon>
    </lineage>
</organism>
<proteinExistence type="inferred from homology"/>
<gene>
    <name evidence="1" type="primary">pus10</name>
    <name type="ordered locus">Ta1296</name>
</gene>
<comment type="function">
    <text evidence="1">Responsible for synthesis of pseudouridine from uracil-54 and uracil-55 in the psi GC loop of transfer RNAs.</text>
</comment>
<comment type="catalytic activity">
    <reaction evidence="1">
        <text>uridine(54) in tRNA = pseudouridine(54) in tRNA</text>
        <dbReference type="Rhea" id="RHEA:57876"/>
        <dbReference type="Rhea" id="RHEA-COMP:10193"/>
        <dbReference type="Rhea" id="RHEA-COMP:14141"/>
        <dbReference type="ChEBI" id="CHEBI:65314"/>
        <dbReference type="ChEBI" id="CHEBI:65315"/>
    </reaction>
</comment>
<comment type="catalytic activity">
    <reaction evidence="1">
        <text>uridine(55) in tRNA = pseudouridine(55) in tRNA</text>
        <dbReference type="Rhea" id="RHEA:42532"/>
        <dbReference type="Rhea" id="RHEA-COMP:10101"/>
        <dbReference type="Rhea" id="RHEA-COMP:10102"/>
        <dbReference type="ChEBI" id="CHEBI:65314"/>
        <dbReference type="ChEBI" id="CHEBI:65315"/>
        <dbReference type="EC" id="5.4.99.25"/>
    </reaction>
</comment>
<comment type="similarity">
    <text evidence="1">Belongs to the pseudouridine synthase Pus10 family.</text>
</comment>
<name>PUS10_THEAC</name>
<protein>
    <recommendedName>
        <fullName evidence="1">tRNA pseudouridine synthase Pus10</fullName>
        <ecNumber evidence="1">5.4.99.25</ecNumber>
    </recommendedName>
    <alternativeName>
        <fullName evidence="1">tRNA pseudouridine 54/55 synthase</fullName>
        <shortName evidence="1">Psi54/55 synthase</shortName>
    </alternativeName>
</protein>
<keyword id="KW-0413">Isomerase</keyword>
<keyword id="KW-1185">Reference proteome</keyword>
<keyword id="KW-0694">RNA-binding</keyword>
<keyword id="KW-0819">tRNA processing</keyword>
<reference key="1">
    <citation type="journal article" date="2000" name="Nature">
        <title>The genome sequence of the thermoacidophilic scavenger Thermoplasma acidophilum.</title>
        <authorList>
            <person name="Ruepp A."/>
            <person name="Graml W."/>
            <person name="Santos-Martinez M.-L."/>
            <person name="Koretke K.K."/>
            <person name="Volker C."/>
            <person name="Mewes H.-W."/>
            <person name="Frishman D."/>
            <person name="Stocker S."/>
            <person name="Lupas A.N."/>
            <person name="Baumeister W."/>
        </authorList>
    </citation>
    <scope>NUCLEOTIDE SEQUENCE [LARGE SCALE GENOMIC DNA]</scope>
    <source>
        <strain>ATCC 25905 / DSM 1728 / JCM 9062 / NBRC 15155 / AMRC-C165</strain>
    </source>
</reference>
<accession>Q9HIN9</accession>
<dbReference type="EC" id="5.4.99.25" evidence="1"/>
<dbReference type="EMBL" id="AL445067">
    <property type="protein sequence ID" value="CAC12418.1"/>
    <property type="molecule type" value="Genomic_DNA"/>
</dbReference>
<dbReference type="RefSeq" id="WP_010901702.1">
    <property type="nucleotide sequence ID" value="NC_002578.1"/>
</dbReference>
<dbReference type="SMR" id="Q9HIN9"/>
<dbReference type="STRING" id="273075.gene:9572519"/>
<dbReference type="PaxDb" id="273075-Ta1296"/>
<dbReference type="EnsemblBacteria" id="CAC12418">
    <property type="protein sequence ID" value="CAC12418"/>
    <property type="gene ID" value="CAC12418"/>
</dbReference>
<dbReference type="KEGG" id="tac:Ta1296"/>
<dbReference type="eggNOG" id="arCOG01015">
    <property type="taxonomic scope" value="Archaea"/>
</dbReference>
<dbReference type="HOGENOM" id="CLU_028780_2_0_2"/>
<dbReference type="InParanoid" id="Q9HIN9"/>
<dbReference type="OrthoDB" id="10348at2157"/>
<dbReference type="Proteomes" id="UP000001024">
    <property type="component" value="Chromosome"/>
</dbReference>
<dbReference type="GO" id="GO:0000049">
    <property type="term" value="F:tRNA binding"/>
    <property type="evidence" value="ECO:0007669"/>
    <property type="project" value="InterPro"/>
</dbReference>
<dbReference type="GO" id="GO:0160148">
    <property type="term" value="F:tRNA pseudouridine(55) synthase activity"/>
    <property type="evidence" value="ECO:0007669"/>
    <property type="project" value="UniProtKB-EC"/>
</dbReference>
<dbReference type="GO" id="GO:0031119">
    <property type="term" value="P:tRNA pseudouridine synthesis"/>
    <property type="evidence" value="ECO:0007669"/>
    <property type="project" value="UniProtKB-UniRule"/>
</dbReference>
<dbReference type="FunFam" id="3.30.70.2510:FF:000001">
    <property type="entry name" value="tRNA pseudouridine synthase Pus10"/>
    <property type="match status" value="1"/>
</dbReference>
<dbReference type="Gene3D" id="3.30.70.2510">
    <property type="match status" value="1"/>
</dbReference>
<dbReference type="Gene3D" id="3.30.70.3190">
    <property type="match status" value="1"/>
</dbReference>
<dbReference type="HAMAP" id="MF_01893">
    <property type="entry name" value="Pus10_arch"/>
    <property type="match status" value="1"/>
</dbReference>
<dbReference type="InterPro" id="IPR020103">
    <property type="entry name" value="PsdUridine_synth_cat_dom_sf"/>
</dbReference>
<dbReference type="InterPro" id="IPR005912">
    <property type="entry name" value="Pus10"/>
</dbReference>
<dbReference type="InterPro" id="IPR039894">
    <property type="entry name" value="Pus10-like"/>
</dbReference>
<dbReference type="InterPro" id="IPR048741">
    <property type="entry name" value="Pus10-like_C"/>
</dbReference>
<dbReference type="InterPro" id="IPR055174">
    <property type="entry name" value="Pus10_THUMP_arc"/>
</dbReference>
<dbReference type="NCBIfam" id="TIGR01213">
    <property type="entry name" value="pseudo_Pus10arc"/>
    <property type="match status" value="1"/>
</dbReference>
<dbReference type="PANTHER" id="PTHR21568">
    <property type="entry name" value="TRNA PSEUDOURIDINE SYNTHASE PUS10"/>
    <property type="match status" value="1"/>
</dbReference>
<dbReference type="PANTHER" id="PTHR21568:SF0">
    <property type="entry name" value="TRNA PSEUDOURIDINE SYNTHASE PUS10"/>
    <property type="match status" value="1"/>
</dbReference>
<dbReference type="Pfam" id="PF21238">
    <property type="entry name" value="Pus10_C"/>
    <property type="match status" value="1"/>
</dbReference>
<dbReference type="Pfam" id="PF22023">
    <property type="entry name" value="Pus10_THUMP_arc"/>
    <property type="match status" value="1"/>
</dbReference>
<dbReference type="SUPFAM" id="SSF55120">
    <property type="entry name" value="Pseudouridine synthase"/>
    <property type="match status" value="1"/>
</dbReference>
<sequence length="389" mass="44511">MFQISELANYRLCKRCSGRIFAYHYHGISNLERGEYLQFAIGCETGNPDFSFVDSKNCDICHGIFDRFDDIYDLVAKKVGDAQYSTFLVGSVFPQDTIRMEEDIQKKFGSSGESIKKEFNREFGKYFSARTGKEYSQDNPDLTILVNAEYLFVDVKIRSIYIYGKYRKFRRDMPQTRWIHRPNGDTVESVIGSVFTRYAGGTNYYLHGSGREDVDVRMLGNGREFVLEVENPRYREFELDPVVKEINTSGKGVEIFDVKFSSHDAVSEVKLEKHRKVYDALVVSDRPIDESRLLEACINLTGKNIYQRTPLRVAQRRSDLVRTRRIDQVDLVGVSANEAEILISAEAGTYIKELVNGDGGRTRPSLSEMYGSPLNVKELDVIKICRGED</sequence>
<evidence type="ECO:0000255" key="1">
    <source>
        <dbReference type="HAMAP-Rule" id="MF_01893"/>
    </source>
</evidence>